<name>SYI_PROMP</name>
<reference key="1">
    <citation type="journal article" date="2003" name="Nature">
        <title>Genome divergence in two Prochlorococcus ecotypes reflects oceanic niche differentiation.</title>
        <authorList>
            <person name="Rocap G."/>
            <person name="Larimer F.W."/>
            <person name="Lamerdin J.E."/>
            <person name="Malfatti S."/>
            <person name="Chain P."/>
            <person name="Ahlgren N.A."/>
            <person name="Arellano A."/>
            <person name="Coleman M."/>
            <person name="Hauser L."/>
            <person name="Hess W.R."/>
            <person name="Johnson Z.I."/>
            <person name="Land M.L."/>
            <person name="Lindell D."/>
            <person name="Post A.F."/>
            <person name="Regala W."/>
            <person name="Shah M."/>
            <person name="Shaw S.L."/>
            <person name="Steglich C."/>
            <person name="Sullivan M.B."/>
            <person name="Ting C.S."/>
            <person name="Tolonen A."/>
            <person name="Webb E.A."/>
            <person name="Zinser E.R."/>
            <person name="Chisholm S.W."/>
        </authorList>
    </citation>
    <scope>NUCLEOTIDE SEQUENCE [LARGE SCALE GENOMIC DNA]</scope>
    <source>
        <strain>CCMP1986 / NIES-2087 / MED4</strain>
    </source>
</reference>
<accession>Q7V352</accession>
<gene>
    <name evidence="1" type="primary">ileS</name>
    <name type="ordered locus">PMM0238</name>
</gene>
<comment type="function">
    <text evidence="1">Catalyzes the attachment of isoleucine to tRNA(Ile). As IleRS can inadvertently accommodate and process structurally similar amino acids such as valine, to avoid such errors it has two additional distinct tRNA(Ile)-dependent editing activities. One activity is designated as 'pretransfer' editing and involves the hydrolysis of activated Val-AMP. The other activity is designated 'posttransfer' editing and involves deacylation of mischarged Val-tRNA(Ile).</text>
</comment>
<comment type="catalytic activity">
    <reaction evidence="1">
        <text>tRNA(Ile) + L-isoleucine + ATP = L-isoleucyl-tRNA(Ile) + AMP + diphosphate</text>
        <dbReference type="Rhea" id="RHEA:11060"/>
        <dbReference type="Rhea" id="RHEA-COMP:9666"/>
        <dbReference type="Rhea" id="RHEA-COMP:9695"/>
        <dbReference type="ChEBI" id="CHEBI:30616"/>
        <dbReference type="ChEBI" id="CHEBI:33019"/>
        <dbReference type="ChEBI" id="CHEBI:58045"/>
        <dbReference type="ChEBI" id="CHEBI:78442"/>
        <dbReference type="ChEBI" id="CHEBI:78528"/>
        <dbReference type="ChEBI" id="CHEBI:456215"/>
        <dbReference type="EC" id="6.1.1.5"/>
    </reaction>
</comment>
<comment type="cofactor">
    <cofactor evidence="1">
        <name>Zn(2+)</name>
        <dbReference type="ChEBI" id="CHEBI:29105"/>
    </cofactor>
    <text evidence="1">Binds 1 zinc ion per subunit.</text>
</comment>
<comment type="subunit">
    <text evidence="1">Monomer.</text>
</comment>
<comment type="subcellular location">
    <subcellularLocation>
        <location evidence="1">Cytoplasm</location>
    </subcellularLocation>
</comment>
<comment type="domain">
    <text evidence="1">IleRS has two distinct active sites: one for aminoacylation and one for editing. The misactivated valine is translocated from the active site to the editing site, which sterically excludes the correctly activated isoleucine. The single editing site contains two valyl binding pockets, one specific for each substrate (Val-AMP or Val-tRNA(Ile)).</text>
</comment>
<comment type="similarity">
    <text evidence="1">Belongs to the class-I aminoacyl-tRNA synthetase family. IleS type 1 subfamily.</text>
</comment>
<feature type="chain" id="PRO_0000098442" description="Isoleucine--tRNA ligase">
    <location>
        <begin position="1"/>
        <end position="965"/>
    </location>
</feature>
<feature type="short sequence motif" description="'HIGH' region">
    <location>
        <begin position="68"/>
        <end position="78"/>
    </location>
</feature>
<feature type="short sequence motif" description="'KMSKS' region">
    <location>
        <begin position="623"/>
        <end position="627"/>
    </location>
</feature>
<feature type="binding site" evidence="1">
    <location>
        <position position="582"/>
    </location>
    <ligand>
        <name>L-isoleucyl-5'-AMP</name>
        <dbReference type="ChEBI" id="CHEBI:178002"/>
    </ligand>
</feature>
<feature type="binding site" evidence="1">
    <location>
        <position position="626"/>
    </location>
    <ligand>
        <name>ATP</name>
        <dbReference type="ChEBI" id="CHEBI:30616"/>
    </ligand>
</feature>
<feature type="binding site" evidence="1">
    <location>
        <position position="936"/>
    </location>
    <ligand>
        <name>Zn(2+)</name>
        <dbReference type="ChEBI" id="CHEBI:29105"/>
    </ligand>
</feature>
<feature type="binding site" evidence="1">
    <location>
        <position position="939"/>
    </location>
    <ligand>
        <name>Zn(2+)</name>
        <dbReference type="ChEBI" id="CHEBI:29105"/>
    </ligand>
</feature>
<feature type="binding site" evidence="1">
    <location>
        <position position="956"/>
    </location>
    <ligand>
        <name>Zn(2+)</name>
        <dbReference type="ChEBI" id="CHEBI:29105"/>
    </ligand>
</feature>
<feature type="binding site" evidence="1">
    <location>
        <position position="959"/>
    </location>
    <ligand>
        <name>Zn(2+)</name>
        <dbReference type="ChEBI" id="CHEBI:29105"/>
    </ligand>
</feature>
<organism>
    <name type="scientific">Prochlorococcus marinus subsp. pastoris (strain CCMP1986 / NIES-2087 / MED4)</name>
    <dbReference type="NCBI Taxonomy" id="59919"/>
    <lineage>
        <taxon>Bacteria</taxon>
        <taxon>Bacillati</taxon>
        <taxon>Cyanobacteriota</taxon>
        <taxon>Cyanophyceae</taxon>
        <taxon>Synechococcales</taxon>
        <taxon>Prochlorococcaceae</taxon>
        <taxon>Prochlorococcus</taxon>
    </lineage>
</organism>
<dbReference type="EC" id="6.1.1.5" evidence="1"/>
<dbReference type="EMBL" id="BX548174">
    <property type="protein sequence ID" value="CAE18697.1"/>
    <property type="molecule type" value="Genomic_DNA"/>
</dbReference>
<dbReference type="RefSeq" id="WP_011131876.1">
    <property type="nucleotide sequence ID" value="NC_005072.1"/>
</dbReference>
<dbReference type="SMR" id="Q7V352"/>
<dbReference type="STRING" id="59919.PMM0238"/>
<dbReference type="KEGG" id="pmm:PMM0238"/>
<dbReference type="eggNOG" id="COG0060">
    <property type="taxonomic scope" value="Bacteria"/>
</dbReference>
<dbReference type="HOGENOM" id="CLU_001493_7_0_3"/>
<dbReference type="OrthoDB" id="9810365at2"/>
<dbReference type="Proteomes" id="UP000001026">
    <property type="component" value="Chromosome"/>
</dbReference>
<dbReference type="GO" id="GO:0005737">
    <property type="term" value="C:cytoplasm"/>
    <property type="evidence" value="ECO:0007669"/>
    <property type="project" value="UniProtKB-SubCell"/>
</dbReference>
<dbReference type="GO" id="GO:0002161">
    <property type="term" value="F:aminoacyl-tRNA deacylase activity"/>
    <property type="evidence" value="ECO:0007669"/>
    <property type="project" value="InterPro"/>
</dbReference>
<dbReference type="GO" id="GO:0005524">
    <property type="term" value="F:ATP binding"/>
    <property type="evidence" value="ECO:0007669"/>
    <property type="project" value="UniProtKB-UniRule"/>
</dbReference>
<dbReference type="GO" id="GO:0004822">
    <property type="term" value="F:isoleucine-tRNA ligase activity"/>
    <property type="evidence" value="ECO:0007669"/>
    <property type="project" value="UniProtKB-UniRule"/>
</dbReference>
<dbReference type="GO" id="GO:0000049">
    <property type="term" value="F:tRNA binding"/>
    <property type="evidence" value="ECO:0007669"/>
    <property type="project" value="InterPro"/>
</dbReference>
<dbReference type="GO" id="GO:0008270">
    <property type="term" value="F:zinc ion binding"/>
    <property type="evidence" value="ECO:0007669"/>
    <property type="project" value="UniProtKB-UniRule"/>
</dbReference>
<dbReference type="GO" id="GO:0006428">
    <property type="term" value="P:isoleucyl-tRNA aminoacylation"/>
    <property type="evidence" value="ECO:0007669"/>
    <property type="project" value="UniProtKB-UniRule"/>
</dbReference>
<dbReference type="CDD" id="cd07960">
    <property type="entry name" value="Anticodon_Ia_Ile_BEm"/>
    <property type="match status" value="1"/>
</dbReference>
<dbReference type="CDD" id="cd00818">
    <property type="entry name" value="IleRS_core"/>
    <property type="match status" value="1"/>
</dbReference>
<dbReference type="FunFam" id="3.40.50.620:FF:000111">
    <property type="entry name" value="Mitochondrial isoleucyl-tRNA synthetase"/>
    <property type="match status" value="1"/>
</dbReference>
<dbReference type="Gene3D" id="1.10.730.20">
    <property type="match status" value="1"/>
</dbReference>
<dbReference type="Gene3D" id="3.40.50.620">
    <property type="entry name" value="HUPs"/>
    <property type="match status" value="2"/>
</dbReference>
<dbReference type="Gene3D" id="1.10.10.830">
    <property type="entry name" value="Ile-tRNA synthetase CP2 domain-like"/>
    <property type="match status" value="1"/>
</dbReference>
<dbReference type="HAMAP" id="MF_02002">
    <property type="entry name" value="Ile_tRNA_synth_type1"/>
    <property type="match status" value="1"/>
</dbReference>
<dbReference type="InterPro" id="IPR001412">
    <property type="entry name" value="aa-tRNA-synth_I_CS"/>
</dbReference>
<dbReference type="InterPro" id="IPR002300">
    <property type="entry name" value="aa-tRNA-synth_Ia"/>
</dbReference>
<dbReference type="InterPro" id="IPR033708">
    <property type="entry name" value="Anticodon_Ile_BEm"/>
</dbReference>
<dbReference type="InterPro" id="IPR002301">
    <property type="entry name" value="Ile-tRNA-ligase"/>
</dbReference>
<dbReference type="InterPro" id="IPR023585">
    <property type="entry name" value="Ile-tRNA-ligase_type1"/>
</dbReference>
<dbReference type="InterPro" id="IPR050081">
    <property type="entry name" value="Ile-tRNA_ligase"/>
</dbReference>
<dbReference type="InterPro" id="IPR013155">
    <property type="entry name" value="M/V/L/I-tRNA-synth_anticd-bd"/>
</dbReference>
<dbReference type="InterPro" id="IPR014729">
    <property type="entry name" value="Rossmann-like_a/b/a_fold"/>
</dbReference>
<dbReference type="InterPro" id="IPR009080">
    <property type="entry name" value="tRNAsynth_Ia_anticodon-bd"/>
</dbReference>
<dbReference type="InterPro" id="IPR009008">
    <property type="entry name" value="Val/Leu/Ile-tRNA-synth_edit"/>
</dbReference>
<dbReference type="InterPro" id="IPR010663">
    <property type="entry name" value="Znf_FPG/IleRS"/>
</dbReference>
<dbReference type="NCBIfam" id="TIGR00392">
    <property type="entry name" value="ileS"/>
    <property type="match status" value="1"/>
</dbReference>
<dbReference type="PANTHER" id="PTHR42765:SF1">
    <property type="entry name" value="ISOLEUCINE--TRNA LIGASE, MITOCHONDRIAL"/>
    <property type="match status" value="1"/>
</dbReference>
<dbReference type="PANTHER" id="PTHR42765">
    <property type="entry name" value="SOLEUCYL-TRNA SYNTHETASE"/>
    <property type="match status" value="1"/>
</dbReference>
<dbReference type="Pfam" id="PF08264">
    <property type="entry name" value="Anticodon_1"/>
    <property type="match status" value="1"/>
</dbReference>
<dbReference type="Pfam" id="PF00133">
    <property type="entry name" value="tRNA-synt_1"/>
    <property type="match status" value="1"/>
</dbReference>
<dbReference type="Pfam" id="PF06827">
    <property type="entry name" value="zf-FPG_IleRS"/>
    <property type="match status" value="1"/>
</dbReference>
<dbReference type="PRINTS" id="PR00984">
    <property type="entry name" value="TRNASYNTHILE"/>
</dbReference>
<dbReference type="SUPFAM" id="SSF47323">
    <property type="entry name" value="Anticodon-binding domain of a subclass of class I aminoacyl-tRNA synthetases"/>
    <property type="match status" value="1"/>
</dbReference>
<dbReference type="SUPFAM" id="SSF52374">
    <property type="entry name" value="Nucleotidylyl transferase"/>
    <property type="match status" value="1"/>
</dbReference>
<dbReference type="SUPFAM" id="SSF50677">
    <property type="entry name" value="ValRS/IleRS/LeuRS editing domain"/>
    <property type="match status" value="1"/>
</dbReference>
<dbReference type="PROSITE" id="PS00178">
    <property type="entry name" value="AA_TRNA_LIGASE_I"/>
    <property type="match status" value="1"/>
</dbReference>
<proteinExistence type="inferred from homology"/>
<protein>
    <recommendedName>
        <fullName evidence="1">Isoleucine--tRNA ligase</fullName>
        <ecNumber evidence="1">6.1.1.5</ecNumber>
    </recommendedName>
    <alternativeName>
        <fullName evidence="1">Isoleucyl-tRNA synthetase</fullName>
        <shortName evidence="1">IleRS</shortName>
    </alternativeName>
</protein>
<evidence type="ECO:0000255" key="1">
    <source>
        <dbReference type="HAMAP-Rule" id="MF_02002"/>
    </source>
</evidence>
<keyword id="KW-0030">Aminoacyl-tRNA synthetase</keyword>
<keyword id="KW-0067">ATP-binding</keyword>
<keyword id="KW-0963">Cytoplasm</keyword>
<keyword id="KW-0436">Ligase</keyword>
<keyword id="KW-0479">Metal-binding</keyword>
<keyword id="KW-0547">Nucleotide-binding</keyword>
<keyword id="KW-0648">Protein biosynthesis</keyword>
<keyword id="KW-0862">Zinc</keyword>
<sequence length="965" mass="111413">MKSKHNKEKKSGFSYKETLNLLKTDFSMRANSVIREPEIHEFWSRNKIDLELGSTNSGKNFTLHDGPPYANGSLHMGHALNKVLKDIINKYKTLQGFKVHFIPGWDCHGLPIELKVLQSLKSNERRNLDSLGLRKKATDYAKIQINNQLEGFKRWGIWGDWDNPYLTLKKNYESAQIGVFGKMFLNGYIYRGLKPVHWSPSSRTALAEAELEYPEEHFSKSIYVSLNITKLSDAVLLKLEEKDLRNKLLSSLNKLFIAIWTTTPWTIPGNEAVAINPRINYVFASDQNGNIYLFARDLISEICEKLDREFNVLLDVKGSLLEGLEYKHPTKNKFCNIVIGGDYITTESGTGIVHTAPGHGMDDFNVGQKYQLPITCIVDEKGNLNKHAEKFCGLNVLKDANDLIIEDLEKNNLLLLKENYKHRYPYDWRTKKPTIFRATEQWFASVEGFRSSALKAIEDVEWMPKTGKKRIYSMVVGRGDWCISRQRSWGVPIPVFYEKEGKGVLINTETINHIKSLFEEYGADVWWEWDEKKLLPEKYRNESDRWEKGLDTMDVWFDSGSSWAAVCEQREELQYPADLYLEGSDQHRGWFQSSLLTSVAVNNKPPYKTVLTHGFALDENGRKMSKSLGNVVDPNIIINGGPNQKIQPAYGADVLRLWVSSVDYSVDVPIGSNILKQLSDVYRKVRNTARYLLGNIHDYDPALEEIDIDQLPLLDQWMLNRLVEVSDEVTIAYENYEFSKFFQILQSFCVVDLSNFYLDIAKDRLYVSAKTQFRRRSCQFVMSRIVENLAVIISPVLCHMAEDIWQNIPYSTIEKSVFERRWPKFPESWLNPELNEHISNLRTLRVEINKAIEGCRTQQMIGAALETEVNYLPENEFFKNSLSWLDKFGNKEVDLYRDWLIVSDFNIVNNLSKDCLSIDNNELGKIQILKAKGLKCDRCWHYQNITVKGIENTKLCERCANIINL</sequence>